<feature type="chain" id="PRO_0000448698" description="Citron rho-interacting kinase">
    <location>
        <begin position="1"/>
        <end position="2055"/>
    </location>
</feature>
<feature type="domain" description="Protein kinase" evidence="5">
    <location>
        <begin position="97"/>
        <end position="359"/>
    </location>
</feature>
<feature type="domain" description="AGC-kinase C-terminal" evidence="7">
    <location>
        <begin position="360"/>
        <end position="430"/>
    </location>
</feature>
<feature type="domain" description="PH" evidence="4">
    <location>
        <begin position="1469"/>
        <end position="1589"/>
    </location>
</feature>
<feature type="domain" description="CNH" evidence="8">
    <location>
        <begin position="1617"/>
        <end position="1907"/>
    </location>
</feature>
<feature type="zinc finger region" description="Phorbol-ester/DAG-type" evidence="6">
    <location>
        <begin position="1388"/>
        <end position="1437"/>
    </location>
</feature>
<feature type="region of interest" description="Disordered" evidence="9">
    <location>
        <begin position="375"/>
        <end position="398"/>
    </location>
</feature>
<feature type="region of interest" description="Disordered" evidence="9">
    <location>
        <begin position="1349"/>
        <end position="1376"/>
    </location>
</feature>
<feature type="region of interest" description="Disordered" evidence="9">
    <location>
        <begin position="1932"/>
        <end position="2040"/>
    </location>
</feature>
<feature type="coiled-coil region" evidence="3">
    <location>
        <begin position="457"/>
        <end position="747"/>
    </location>
</feature>
<feature type="coiled-coil region" evidence="3">
    <location>
        <begin position="773"/>
        <end position="1238"/>
    </location>
</feature>
<feature type="coiled-coil region" evidence="3">
    <location>
        <begin position="1284"/>
        <end position="1318"/>
    </location>
</feature>
<feature type="compositionally biased region" description="Low complexity" evidence="9">
    <location>
        <begin position="1353"/>
        <end position="1363"/>
    </location>
</feature>
<feature type="compositionally biased region" description="Basic and acidic residues" evidence="9">
    <location>
        <begin position="1365"/>
        <end position="1376"/>
    </location>
</feature>
<feature type="compositionally biased region" description="Polar residues" evidence="9">
    <location>
        <begin position="1939"/>
        <end position="1948"/>
    </location>
</feature>
<feature type="compositionally biased region" description="Basic and acidic residues" evidence="9">
    <location>
        <begin position="1974"/>
        <end position="2031"/>
    </location>
</feature>
<feature type="active site" description="Proton acceptor" evidence="5">
    <location>
        <position position="221"/>
    </location>
</feature>
<feature type="binding site" evidence="5">
    <location>
        <begin position="103"/>
        <end position="111"/>
    </location>
    <ligand>
        <name>ATP</name>
        <dbReference type="ChEBI" id="CHEBI:30616"/>
    </ligand>
</feature>
<feature type="binding site" evidence="5">
    <location>
        <position position="126"/>
    </location>
    <ligand>
        <name>ATP</name>
        <dbReference type="ChEBI" id="CHEBI:30616"/>
    </ligand>
</feature>
<feature type="splice variant" id="VSP_060430" description="In isoform 2.">
    <location>
        <begin position="1"/>
        <end position="466"/>
    </location>
</feature>
<feature type="splice variant" id="VSP_060431" description="In isoform 2.">
    <original>K</original>
    <variation>KGLFSRRKEDPALPTQ</variation>
    <location>
        <position position="1279"/>
    </location>
</feature>
<feature type="splice variant" id="VSP_060432" description="In isoform 2 and isoform 3.">
    <original>A</original>
    <variation>AAWDCTSCERLPVWVE</variation>
    <location>
        <position position="1602"/>
    </location>
</feature>
<feature type="splice variant" id="VSP_060433" description="In isoform 2 and isoform 3.">
    <location>
        <position position="1945"/>
    </location>
</feature>
<keyword id="KW-0025">Alternative splicing</keyword>
<keyword id="KW-0067">ATP-binding</keyword>
<keyword id="KW-0175">Coiled coil</keyword>
<keyword id="KW-0963">Cytoplasm</keyword>
<keyword id="KW-0418">Kinase</keyword>
<keyword id="KW-0479">Metal-binding</keyword>
<keyword id="KW-0547">Nucleotide-binding</keyword>
<keyword id="KW-0597">Phosphoprotein</keyword>
<keyword id="KW-1185">Reference proteome</keyword>
<keyword id="KW-0723">Serine/threonine-protein kinase</keyword>
<keyword id="KW-0808">Transferase</keyword>
<keyword id="KW-0862">Zinc</keyword>
<keyword id="KW-0863">Zinc-finger</keyword>
<reference evidence="12" key="1">
    <citation type="submission" date="1997-12" db="EMBL/GenBank/DDBJ databases">
        <title>Citron, a PSD-95-binding protein at glutamatergic synapses on inhibitory neurons.</title>
        <authorList>
            <person name="Zhang W."/>
            <person name="Apperson M.L."/>
            <person name="Vasquez L.E."/>
            <person name="Kennedy M.B."/>
        </authorList>
    </citation>
    <scope>NUCLEOTIDE SEQUENCE [MRNA] (ISOFORM 2)</scope>
</reference>
<reference evidence="13" key="2">
    <citation type="journal article" date="2004" name="Nature">
        <title>Genome sequence of the Brown Norway rat yields insights into mammalian evolution.</title>
        <authorList>
            <person name="Gibbs R.A."/>
            <person name="Weinstock G.M."/>
            <person name="Metzker M.L."/>
            <person name="Muzny D.M."/>
            <person name="Sodergren E.J."/>
            <person name="Scherer S."/>
            <person name="Scott G."/>
            <person name="Steffen D."/>
            <person name="Worley K.C."/>
            <person name="Burch P.E."/>
            <person name="Okwuonu G."/>
            <person name="Hines S."/>
            <person name="Lewis L."/>
            <person name="Deramo C."/>
            <person name="Delgado O."/>
            <person name="Dugan-Rocha S."/>
            <person name="Miner G."/>
            <person name="Morgan M."/>
            <person name="Hawes A."/>
            <person name="Gill R."/>
            <person name="Holt R.A."/>
            <person name="Adams M.D."/>
            <person name="Amanatides P.G."/>
            <person name="Baden-Tillson H."/>
            <person name="Barnstead M."/>
            <person name="Chin S."/>
            <person name="Evans C.A."/>
            <person name="Ferriera S."/>
            <person name="Fosler C."/>
            <person name="Glodek A."/>
            <person name="Gu Z."/>
            <person name="Jennings D."/>
            <person name="Kraft C.L."/>
            <person name="Nguyen T."/>
            <person name="Pfannkoch C.M."/>
            <person name="Sitter C."/>
            <person name="Sutton G.G."/>
            <person name="Venter J.C."/>
            <person name="Woodage T."/>
            <person name="Smith D."/>
            <person name="Lee H.-M."/>
            <person name="Gustafson E."/>
            <person name="Cahill P."/>
            <person name="Kana A."/>
            <person name="Doucette-Stamm L."/>
            <person name="Weinstock K."/>
            <person name="Fechtel K."/>
            <person name="Weiss R.B."/>
            <person name="Dunn D.M."/>
            <person name="Green E.D."/>
            <person name="Blakesley R.W."/>
            <person name="Bouffard G.G."/>
            <person name="De Jong P.J."/>
            <person name="Osoegawa K."/>
            <person name="Zhu B."/>
            <person name="Marra M."/>
            <person name="Schein J."/>
            <person name="Bosdet I."/>
            <person name="Fjell C."/>
            <person name="Jones S."/>
            <person name="Krzywinski M."/>
            <person name="Mathewson C."/>
            <person name="Siddiqui A."/>
            <person name="Wye N."/>
            <person name="McPherson J."/>
            <person name="Zhao S."/>
            <person name="Fraser C.M."/>
            <person name="Shetty J."/>
            <person name="Shatsman S."/>
            <person name="Geer K."/>
            <person name="Chen Y."/>
            <person name="Abramzon S."/>
            <person name="Nierman W.C."/>
            <person name="Havlak P.H."/>
            <person name="Chen R."/>
            <person name="Durbin K.J."/>
            <person name="Egan A."/>
            <person name="Ren Y."/>
            <person name="Song X.-Z."/>
            <person name="Li B."/>
            <person name="Liu Y."/>
            <person name="Qin X."/>
            <person name="Cawley S."/>
            <person name="Cooney A.J."/>
            <person name="D'Souza L.M."/>
            <person name="Martin K."/>
            <person name="Wu J.Q."/>
            <person name="Gonzalez-Garay M.L."/>
            <person name="Jackson A.R."/>
            <person name="Kalafus K.J."/>
            <person name="McLeod M.P."/>
            <person name="Milosavljevic A."/>
            <person name="Virk D."/>
            <person name="Volkov A."/>
            <person name="Wheeler D.A."/>
            <person name="Zhang Z."/>
            <person name="Bailey J.A."/>
            <person name="Eichler E.E."/>
            <person name="Tuzun E."/>
            <person name="Birney E."/>
            <person name="Mongin E."/>
            <person name="Ureta-Vidal A."/>
            <person name="Woodwark C."/>
            <person name="Zdobnov E."/>
            <person name="Bork P."/>
            <person name="Suyama M."/>
            <person name="Torrents D."/>
            <person name="Alexandersson M."/>
            <person name="Trask B.J."/>
            <person name="Young J.M."/>
            <person name="Huang H."/>
            <person name="Wang H."/>
            <person name="Xing H."/>
            <person name="Daniels S."/>
            <person name="Gietzen D."/>
            <person name="Schmidt J."/>
            <person name="Stevens K."/>
            <person name="Vitt U."/>
            <person name="Wingrove J."/>
            <person name="Camara F."/>
            <person name="Mar Alba M."/>
            <person name="Abril J.F."/>
            <person name="Guigo R."/>
            <person name="Smit A."/>
            <person name="Dubchak I."/>
            <person name="Rubin E.M."/>
            <person name="Couronne O."/>
            <person name="Poliakov A."/>
            <person name="Huebner N."/>
            <person name="Ganten D."/>
            <person name="Goesele C."/>
            <person name="Hummel O."/>
            <person name="Kreitler T."/>
            <person name="Lee Y.-A."/>
            <person name="Monti J."/>
            <person name="Schulz H."/>
            <person name="Zimdahl H."/>
            <person name="Himmelbauer H."/>
            <person name="Lehrach H."/>
            <person name="Jacob H.J."/>
            <person name="Bromberg S."/>
            <person name="Gullings-Handley J."/>
            <person name="Jensen-Seaman M.I."/>
            <person name="Kwitek A.E."/>
            <person name="Lazar J."/>
            <person name="Pasko D."/>
            <person name="Tonellato P.J."/>
            <person name="Twigger S."/>
            <person name="Ponting C.P."/>
            <person name="Duarte J.M."/>
            <person name="Rice S."/>
            <person name="Goodstadt L."/>
            <person name="Beatson S.A."/>
            <person name="Emes R.D."/>
            <person name="Winter E.E."/>
            <person name="Webber C."/>
            <person name="Brandt P."/>
            <person name="Nyakatura G."/>
            <person name="Adetobi M."/>
            <person name="Chiaromonte F."/>
            <person name="Elnitski L."/>
            <person name="Eswara P."/>
            <person name="Hardison R.C."/>
            <person name="Hou M."/>
            <person name="Kolbe D."/>
            <person name="Makova K."/>
            <person name="Miller W."/>
            <person name="Nekrutenko A."/>
            <person name="Riemer C."/>
            <person name="Schwartz S."/>
            <person name="Taylor J."/>
            <person name="Yang S."/>
            <person name="Zhang Y."/>
            <person name="Lindpaintner K."/>
            <person name="Andrews T.D."/>
            <person name="Caccamo M."/>
            <person name="Clamp M."/>
            <person name="Clarke L."/>
            <person name="Curwen V."/>
            <person name="Durbin R.M."/>
            <person name="Eyras E."/>
            <person name="Searle S.M."/>
            <person name="Cooper G.M."/>
            <person name="Batzoglou S."/>
            <person name="Brudno M."/>
            <person name="Sidow A."/>
            <person name="Stone E.A."/>
            <person name="Payseur B.A."/>
            <person name="Bourque G."/>
            <person name="Lopez-Otin C."/>
            <person name="Puente X.S."/>
            <person name="Chakrabarti K."/>
            <person name="Chatterji S."/>
            <person name="Dewey C."/>
            <person name="Pachter L."/>
            <person name="Bray N."/>
            <person name="Yap V.B."/>
            <person name="Caspi A."/>
            <person name="Tesler G."/>
            <person name="Pevzner P.A."/>
            <person name="Haussler D."/>
            <person name="Roskin K.M."/>
            <person name="Baertsch R."/>
            <person name="Clawson H."/>
            <person name="Furey T.S."/>
            <person name="Hinrichs A.S."/>
            <person name="Karolchik D."/>
            <person name="Kent W.J."/>
            <person name="Rosenbloom K.R."/>
            <person name="Trumbower H."/>
            <person name="Weirauch M."/>
            <person name="Cooper D.N."/>
            <person name="Stenson P.D."/>
            <person name="Ma B."/>
            <person name="Brent M."/>
            <person name="Arumugam M."/>
            <person name="Shteynberg D."/>
            <person name="Copley R.R."/>
            <person name="Taylor M.S."/>
            <person name="Riethman H."/>
            <person name="Mudunuri U."/>
            <person name="Peterson J."/>
            <person name="Guyer M."/>
            <person name="Felsenfeld A."/>
            <person name="Old S."/>
            <person name="Mockrin S."/>
            <person name="Collins F.S."/>
        </authorList>
    </citation>
    <scope>NUCLEOTIDE SEQUENCE [LARGE SCALE GENOMIC DNA]</scope>
    <source>
        <strain>Brown Norway</strain>
    </source>
</reference>
<reference evidence="15" key="3">
    <citation type="journal article" date="2012" name="Nat. Commun.">
        <title>Quantitative maps of protein phosphorylation sites across 14 different rat organs and tissues.</title>
        <authorList>
            <person name="Lundby A."/>
            <person name="Secher A."/>
            <person name="Lage K."/>
            <person name="Nordsborg N.B."/>
            <person name="Dmytriyev A."/>
            <person name="Lundby C."/>
            <person name="Olsen J.V."/>
        </authorList>
    </citation>
    <scope>IDENTIFICATION BY MASS SPECTROMETRY [LARGE SCALE ANALYSIS]</scope>
</reference>
<reference evidence="11" key="4">
    <citation type="journal article" date="2014" name="PLoS ONE">
        <title>The DCR protein TTC3 affects differentiation and Golgi compactness in neurons through specific actin-regulating pathways.</title>
        <authorList>
            <person name="Berto G.E."/>
            <person name="Iobbi C."/>
            <person name="Camera P."/>
            <person name="Scarpa E."/>
            <person name="Iampietro C."/>
            <person name="Bianchi F."/>
            <person name="Gai M."/>
            <person name="Sgro F."/>
            <person name="Cristofani F."/>
            <person name="Gaertner A."/>
            <person name="Dotti C.G."/>
            <person name="Di Cunto F."/>
        </authorList>
    </citation>
    <scope>FUNCTION</scope>
</reference>
<accession>E9PSL7</accession>
<accession>A0A0G2JWA9</accession>
<accession>Q9QX19</accession>
<proteinExistence type="evidence at protein level"/>
<comment type="function">
    <text evidence="1 10">Plays a role in cytokinesis (By similarity). Required for KIF14 localization to the central spindle and midbody (By similarity). Putative RHO/RAC effector that binds to the GTP-bound forms of RHO and RAC1 (By similarity). It probably binds p21 with a tighter specificity in vivo (By similarity). Displays serine/threonine protein kinase activity (By similarity). Plays an important role in the regulation of cytokinesis and the development of the central nervous system (PubMed:24695496). Phosphorylates MYL9/MLC2 (By similarity).</text>
</comment>
<comment type="catalytic activity">
    <reaction evidence="2">
        <text>L-seryl-[protein] + ATP = O-phospho-L-seryl-[protein] + ADP + H(+)</text>
        <dbReference type="Rhea" id="RHEA:17989"/>
        <dbReference type="Rhea" id="RHEA-COMP:9863"/>
        <dbReference type="Rhea" id="RHEA-COMP:11604"/>
        <dbReference type="ChEBI" id="CHEBI:15378"/>
        <dbReference type="ChEBI" id="CHEBI:29999"/>
        <dbReference type="ChEBI" id="CHEBI:30616"/>
        <dbReference type="ChEBI" id="CHEBI:83421"/>
        <dbReference type="ChEBI" id="CHEBI:456216"/>
        <dbReference type="EC" id="2.7.11.1"/>
    </reaction>
</comment>
<comment type="catalytic activity">
    <reaction evidence="2">
        <text>L-threonyl-[protein] + ATP = O-phospho-L-threonyl-[protein] + ADP + H(+)</text>
        <dbReference type="Rhea" id="RHEA:46608"/>
        <dbReference type="Rhea" id="RHEA-COMP:11060"/>
        <dbReference type="Rhea" id="RHEA-COMP:11605"/>
        <dbReference type="ChEBI" id="CHEBI:15378"/>
        <dbReference type="ChEBI" id="CHEBI:30013"/>
        <dbReference type="ChEBI" id="CHEBI:30616"/>
        <dbReference type="ChEBI" id="CHEBI:61977"/>
        <dbReference type="ChEBI" id="CHEBI:456216"/>
        <dbReference type="EC" id="2.7.11.1"/>
    </reaction>
</comment>
<comment type="subunit">
    <text evidence="1 2">Homodimer (By similarity). Directly interacts with KIF14 depending on the activation state (stronger interaction with the kinase-dead form) (By similarity). Interacts with TTC3 (By similarity).</text>
</comment>
<comment type="subcellular location">
    <subcellularLocation>
        <location evidence="2">Cytoplasm</location>
    </subcellularLocation>
</comment>
<comment type="alternative products">
    <event type="alternative splicing"/>
    <isoform>
        <id>E9PSL7-1</id>
        <name>1</name>
        <sequence type="displayed"/>
    </isoform>
    <isoform>
        <id>E9PSL7-2</id>
        <name>2</name>
        <sequence type="described" ref="VSP_060430 VSP_060431 VSP_060432 VSP_060433"/>
    </isoform>
    <isoform>
        <id>E9PSL7-3</id>
        <name>3</name>
        <sequence type="described" ref="VSP_060432 VSP_060433"/>
    </isoform>
</comment>
<comment type="similarity">
    <text evidence="11">Belongs to the protein kinase superfamily. AGC Ser/Thr protein kinase family.</text>
</comment>
<name>CTRO_RAT</name>
<sequence>MLKFKYGVRNPSEASAPEPIASRASRLNLFFQGKPPLMTQQQMSALSREGVLDALFVLLEECSQPALMKIKHVSSFVRKYSDTIAELRELQPSVRDFEVRSLVGCGHFAEVQVVREKATGDVYAMKIMKKAALRAQEQVSFFEEERNILSQSTSPWIPQLQYAFQDKNNLYLVMEYQPGGDLLSLLNRYEDQLDENMIQFYLAELILAVHSVHQMGYVHRDIKPENILIDRTGHIKLVDFGSAAKMNSNKVDAKLPIGTPDYMAPEVLTVMNEDRRGTYGLDCDWWSVGVVAYEMLYGKTPFTEGTSARTFNNIMNFQRFLKFPDDPKVSSELLDLIQSLLCVQKERLKFEGLCCHPFFARTDWNNIRNSPPPFVPTLKSDDDTSNFDEPEKNSWVSSSPCQLSPSGFSGEELPFVGFSYSKALGYLGRSESVVSGLDSPAKISSMEKKLLIKSKELQDSQDKCHKMEQEMARLHRRVSEVEAVLSQKEVELKASETQRSLLEQDLATYITECSSLKRSLEQARMEVSQEDDKALQLLHDIREQSRKLQEIKEQEYQAQVEEMRLMMNQLEEDLVSARRRSDLYESELRESRLAAEEFKRKANECQHKLMKAKDLGKPEVGECSRLEKINAEQQLKIQELQEKLEKAVKASTEATELLQNIRQAKERAERELEKLHNREDSSEGIKKKLVEAEERRHSLENKVKRLETMERRENRLKDDIQTKSEQIQQMADKILELEEKHREAQVSAQHLEVHLKQKEQHYEEKIKVLDNQIKKDLADKESLETMMQRHEEEAHEKGKILSEQKAMINAMDSKIRSLEQRIVELSEANKLAANSSLFTQRNMKAQEEMISELRQQKFYLETQAGKLEAQNRKLEEQLEKISHQDHSDKNRLLELETRLREVSLEHEEQKLELKRQLTELQLSLQERESQLTALQAARAALESQLRQAKTELEETTAEAEEEIQALTAHRDEIQRKFDALRNSCTVITDLEEQLNQLTEDNAELNNQNFYLSKQLDEASGANDEIVQLRSEVDHLRREITEREMQLTSQKQTMEALKTTCTMLEEQVMDLEALNDELLEKERQWEAWRSVLGDEKSQFECRVRELQRMLDTEKQSRARADQRITESRQVVELAVKEHKAEILALQQALKEQKLKAESLSDKLNDLEKKHAMLEMNARSLQQKLETERELKQRLLEEQAKLQQQMDLQKNHIFRLTQGLQEALDRADLLKTERSDLEYQLENIQVLYSHEKVKMEGTISQQTKLIDFLQAKMDQPAKKKKVPLQYNELKLALEKEKARCAELEEALQKTRIELRSAREEAAHRKATDHPHPSTPATARQQIAMSAIVRSPEHQPSAMSLLAPPSSRRKEASTPEEFSRRLKERMHHNIPHRFNVGLNMRATKCAVCLDTVHFGRQASKCLECQVMCHPKCSTCLPATCGLPAEYATHFTEAFCRDKVSSPGLQSKEPSSSLHLEGWMKVPRNNKRGQQGWDRKYIVLEGSKVLIYDNEAREAGQRPVEEFELCLPDGDVSIHGAVGASELANTAKADVPYILKMESHPHTTCWPGRTLYLLAPSFPDKQRWVTALESVVAGGRVSREKAEADAKLLGNSLLKLEGDDRLDMNCTLPFSDQVVLVGTEEGLYALNVLKNSLTHIPGIGAVFQIYIIKDLEKLLMIAGEERALCLVDVKKVKQSLAQSHLPAQPDVSPNIFEAVKGCHLFAAGKIENSLCICAAMPSKVVILRYNDNLSKFCIRKEIETSEPCSCIHFTNYSILIGTNKFYEIDMKQYTLEEFLDKNDHSLAPAVFASSTNSFPVSIVQANSTGQREEYLLCFHEFGVFVDSYGRRSRTDDLKWSRLPLAFAYREPYLFVTHFNSLEVIEIQARSSLGTPARAYLEIPNPRYLGPAISSGAIYLASSYQDKLRVICCKGNLVKESGTEQHRVPSTSRSSPNKRGPPTYNEHITKRVASSPAPPEGPSHPREPSTPHRYRDREGRTELRRDKSPGRPLEREKSPGRMLSTRRERSPGRLFEDSSRGRLPAGAVRTPLSQVNKVWDQSSV</sequence>
<organism evidence="13">
    <name type="scientific">Rattus norvegicus</name>
    <name type="common">Rat</name>
    <dbReference type="NCBI Taxonomy" id="10116"/>
    <lineage>
        <taxon>Eukaryota</taxon>
        <taxon>Metazoa</taxon>
        <taxon>Chordata</taxon>
        <taxon>Craniata</taxon>
        <taxon>Vertebrata</taxon>
        <taxon>Euteleostomi</taxon>
        <taxon>Mammalia</taxon>
        <taxon>Eutheria</taxon>
        <taxon>Euarchontoglires</taxon>
        <taxon>Glires</taxon>
        <taxon>Rodentia</taxon>
        <taxon>Myomorpha</taxon>
        <taxon>Muroidea</taxon>
        <taxon>Muridae</taxon>
        <taxon>Murinae</taxon>
        <taxon>Rattus</taxon>
    </lineage>
</organism>
<evidence type="ECO:0000250" key="1">
    <source>
        <dbReference type="UniProtKB" id="O14578"/>
    </source>
</evidence>
<evidence type="ECO:0000250" key="2">
    <source>
        <dbReference type="UniProtKB" id="P49025"/>
    </source>
</evidence>
<evidence type="ECO:0000255" key="3"/>
<evidence type="ECO:0000255" key="4">
    <source>
        <dbReference type="PROSITE-ProRule" id="PRU00145"/>
    </source>
</evidence>
<evidence type="ECO:0000255" key="5">
    <source>
        <dbReference type="PROSITE-ProRule" id="PRU00159"/>
    </source>
</evidence>
<evidence type="ECO:0000255" key="6">
    <source>
        <dbReference type="PROSITE-ProRule" id="PRU00226"/>
    </source>
</evidence>
<evidence type="ECO:0000255" key="7">
    <source>
        <dbReference type="PROSITE-ProRule" id="PRU00618"/>
    </source>
</evidence>
<evidence type="ECO:0000255" key="8">
    <source>
        <dbReference type="PROSITE-ProRule" id="PRU00795"/>
    </source>
</evidence>
<evidence type="ECO:0000256" key="9">
    <source>
        <dbReference type="SAM" id="MobiDB-lite"/>
    </source>
</evidence>
<evidence type="ECO:0000269" key="10">
    <source>
    </source>
</evidence>
<evidence type="ECO:0000305" key="11"/>
<evidence type="ECO:0000312" key="12">
    <source>
        <dbReference type="EMBL" id="AAC25483.1"/>
    </source>
</evidence>
<evidence type="ECO:0000312" key="13">
    <source>
        <dbReference type="Proteomes" id="UP000002494"/>
    </source>
</evidence>
<evidence type="ECO:0000312" key="14">
    <source>
        <dbReference type="RGD" id="70878"/>
    </source>
</evidence>
<evidence type="ECO:0007744" key="15">
    <source>
    </source>
</evidence>
<gene>
    <name evidence="14" type="primary">Cit</name>
    <name evidence="1" type="synonym">CRIK</name>
</gene>
<protein>
    <recommendedName>
        <fullName evidence="1">Citron rho-interacting kinase</fullName>
        <shortName evidence="1">CRIK</shortName>
        <ecNumber evidence="2">2.7.11.1</ecNumber>
    </recommendedName>
    <alternativeName>
        <fullName evidence="2">Rho-interacting, serine/threonine-protein kinase 21</fullName>
    </alternativeName>
</protein>
<dbReference type="EC" id="2.7.11.1" evidence="2"/>
<dbReference type="EMBL" id="AF039218">
    <property type="protein sequence ID" value="AAC25483.1"/>
    <property type="molecule type" value="mRNA"/>
</dbReference>
<dbReference type="EMBL" id="AABR07036527">
    <property type="status" value="NOT_ANNOTATED_CDS"/>
    <property type="molecule type" value="Genomic_DNA"/>
</dbReference>
<dbReference type="EMBL" id="AABR07036528">
    <property type="status" value="NOT_ANNOTATED_CDS"/>
    <property type="molecule type" value="Genomic_DNA"/>
</dbReference>
<dbReference type="EMBL" id="AABR07036529">
    <property type="status" value="NOT_ANNOTATED_CDS"/>
    <property type="molecule type" value="Genomic_DNA"/>
</dbReference>
<dbReference type="EMBL" id="AABR07036530">
    <property type="status" value="NOT_ANNOTATED_CDS"/>
    <property type="molecule type" value="Genomic_DNA"/>
</dbReference>
<dbReference type="EMBL" id="AABR07036531">
    <property type="status" value="NOT_ANNOTATED_CDS"/>
    <property type="molecule type" value="Genomic_DNA"/>
</dbReference>
<dbReference type="RefSeq" id="NP_001025082.1">
    <molecule id="E9PSL7-1"/>
    <property type="nucleotide sequence ID" value="NM_001029911.1"/>
</dbReference>
<dbReference type="RefSeq" id="XP_006249534.1">
    <molecule id="E9PSL7-1"/>
    <property type="nucleotide sequence ID" value="XM_006249472.5"/>
</dbReference>
<dbReference type="SMR" id="E9PSL7"/>
<dbReference type="FunCoup" id="E9PSL7">
    <property type="interactions" value="275"/>
</dbReference>
<dbReference type="IntAct" id="E9PSL7">
    <property type="interactions" value="5"/>
</dbReference>
<dbReference type="MINT" id="E9PSL7"/>
<dbReference type="STRING" id="10116.ENSRNOP00000069808"/>
<dbReference type="GlyGen" id="E9PSL7">
    <property type="glycosylation" value="1 site"/>
</dbReference>
<dbReference type="iPTMnet" id="E9PSL7"/>
<dbReference type="PhosphoSitePlus" id="E9PSL7"/>
<dbReference type="jPOST" id="E9PSL7"/>
<dbReference type="PaxDb" id="10116-ENSRNOP00000053869"/>
<dbReference type="Ensembl" id="ENSRNOT00000086716.2">
    <molecule id="E9PSL7-3"/>
    <property type="protein sequence ID" value="ENSRNOP00000069808.1"/>
    <property type="gene ID" value="ENSRNOG00000001143.9"/>
</dbReference>
<dbReference type="GeneID" id="83620"/>
<dbReference type="KEGG" id="rno:83620"/>
<dbReference type="AGR" id="RGD:70878"/>
<dbReference type="CTD" id="11113"/>
<dbReference type="RGD" id="70878">
    <property type="gene designation" value="Cit"/>
</dbReference>
<dbReference type="VEuPathDB" id="HostDB:ENSRNOG00000001143"/>
<dbReference type="eggNOG" id="KOG0612">
    <property type="taxonomic scope" value="Eukaryota"/>
</dbReference>
<dbReference type="eggNOG" id="KOG0976">
    <property type="taxonomic scope" value="Eukaryota"/>
</dbReference>
<dbReference type="GeneTree" id="ENSGT01030000234517"/>
<dbReference type="HOGENOM" id="CLU_000288_140_2_1"/>
<dbReference type="InParanoid" id="E9PSL7"/>
<dbReference type="Reactome" id="R-RNO-5625900">
    <property type="pathway name" value="RHO GTPases activate CIT"/>
</dbReference>
<dbReference type="Reactome" id="R-RNO-8980692">
    <property type="pathway name" value="RHOA GTPase cycle"/>
</dbReference>
<dbReference type="Reactome" id="R-RNO-9013026">
    <property type="pathway name" value="RHOB GTPase cycle"/>
</dbReference>
<dbReference type="Reactome" id="R-RNO-9013149">
    <property type="pathway name" value="RAC1 GTPase cycle"/>
</dbReference>
<dbReference type="PRO" id="PR:E9PSL7"/>
<dbReference type="Proteomes" id="UP000002494">
    <property type="component" value="Chromosome 12"/>
</dbReference>
<dbReference type="Bgee" id="ENSRNOG00000001143">
    <property type="expression patterns" value="Expressed in frontal cortex and 17 other cell types or tissues"/>
</dbReference>
<dbReference type="ExpressionAtlas" id="E9PSL7">
    <property type="expression patterns" value="baseline and differential"/>
</dbReference>
<dbReference type="GO" id="GO:0015629">
    <property type="term" value="C:actin cytoskeleton"/>
    <property type="evidence" value="ECO:0000266"/>
    <property type="project" value="RGD"/>
</dbReference>
<dbReference type="GO" id="GO:0032154">
    <property type="term" value="C:cleavage furrow"/>
    <property type="evidence" value="ECO:0000314"/>
    <property type="project" value="RGD"/>
</dbReference>
<dbReference type="GO" id="GO:0005737">
    <property type="term" value="C:cytoplasm"/>
    <property type="evidence" value="ECO:0000266"/>
    <property type="project" value="RGD"/>
</dbReference>
<dbReference type="GO" id="GO:0005829">
    <property type="term" value="C:cytosol"/>
    <property type="evidence" value="ECO:0000266"/>
    <property type="project" value="RGD"/>
</dbReference>
<dbReference type="GO" id="GO:0098982">
    <property type="term" value="C:GABA-ergic synapse"/>
    <property type="evidence" value="ECO:0000314"/>
    <property type="project" value="RGD"/>
</dbReference>
<dbReference type="GO" id="GO:0099573">
    <property type="term" value="C:glutamatergic postsynaptic density"/>
    <property type="evidence" value="ECO:0000314"/>
    <property type="project" value="RGD"/>
</dbReference>
<dbReference type="GO" id="GO:0031985">
    <property type="term" value="C:Golgi cisterna"/>
    <property type="evidence" value="ECO:0000314"/>
    <property type="project" value="RGD"/>
</dbReference>
<dbReference type="GO" id="GO:0030496">
    <property type="term" value="C:midbody"/>
    <property type="evidence" value="ECO:0000314"/>
    <property type="project" value="RGD"/>
</dbReference>
<dbReference type="GO" id="GO:0043025">
    <property type="term" value="C:neuronal cell body"/>
    <property type="evidence" value="ECO:0000314"/>
    <property type="project" value="RGD"/>
</dbReference>
<dbReference type="GO" id="GO:0099092">
    <property type="term" value="C:postsynaptic density, intracellular component"/>
    <property type="evidence" value="ECO:0000314"/>
    <property type="project" value="RGD"/>
</dbReference>
<dbReference type="GO" id="GO:0001726">
    <property type="term" value="C:ruffle"/>
    <property type="evidence" value="ECO:0000266"/>
    <property type="project" value="RGD"/>
</dbReference>
<dbReference type="GO" id="GO:0005773">
    <property type="term" value="C:vacuole"/>
    <property type="evidence" value="ECO:0000266"/>
    <property type="project" value="RGD"/>
</dbReference>
<dbReference type="GO" id="GO:0005524">
    <property type="term" value="F:ATP binding"/>
    <property type="evidence" value="ECO:0007669"/>
    <property type="project" value="UniProtKB-KW"/>
</dbReference>
<dbReference type="GO" id="GO:0030165">
    <property type="term" value="F:PDZ domain binding"/>
    <property type="evidence" value="ECO:0000266"/>
    <property type="project" value="RGD"/>
</dbReference>
<dbReference type="GO" id="GO:0019901">
    <property type="term" value="F:protein kinase binding"/>
    <property type="evidence" value="ECO:0000266"/>
    <property type="project" value="RGD"/>
</dbReference>
<dbReference type="GO" id="GO:0106310">
    <property type="term" value="F:protein serine kinase activity"/>
    <property type="evidence" value="ECO:0007669"/>
    <property type="project" value="RHEA"/>
</dbReference>
<dbReference type="GO" id="GO:0004674">
    <property type="term" value="F:protein serine/threonine kinase activity"/>
    <property type="evidence" value="ECO:0000266"/>
    <property type="project" value="RGD"/>
</dbReference>
<dbReference type="GO" id="GO:0030291">
    <property type="term" value="F:protein serine/threonine kinase inhibitor activity"/>
    <property type="evidence" value="ECO:0000266"/>
    <property type="project" value="RGD"/>
</dbReference>
<dbReference type="GO" id="GO:0097110">
    <property type="term" value="F:scaffold protein binding"/>
    <property type="evidence" value="ECO:0000353"/>
    <property type="project" value="RGD"/>
</dbReference>
<dbReference type="GO" id="GO:0001223">
    <property type="term" value="F:transcription coactivator binding"/>
    <property type="evidence" value="ECO:0000266"/>
    <property type="project" value="RGD"/>
</dbReference>
<dbReference type="GO" id="GO:0008270">
    <property type="term" value="F:zinc ion binding"/>
    <property type="evidence" value="ECO:0007669"/>
    <property type="project" value="UniProtKB-KW"/>
</dbReference>
<dbReference type="GO" id="GO:0016358">
    <property type="term" value="P:dendrite development"/>
    <property type="evidence" value="ECO:0000266"/>
    <property type="project" value="RGD"/>
</dbReference>
<dbReference type="GO" id="GO:0000086">
    <property type="term" value="P:G2/M transition of mitotic cell cycle"/>
    <property type="evidence" value="ECO:0000315"/>
    <property type="project" value="RGD"/>
</dbReference>
<dbReference type="GO" id="GO:0007214">
    <property type="term" value="P:gamma-aminobutyric acid signaling pathway"/>
    <property type="evidence" value="ECO:0000314"/>
    <property type="project" value="RGD"/>
</dbReference>
<dbReference type="GO" id="GO:0048699">
    <property type="term" value="P:generation of neurons"/>
    <property type="evidence" value="ECO:0000266"/>
    <property type="project" value="RGD"/>
</dbReference>
<dbReference type="GO" id="GO:0007030">
    <property type="term" value="P:Golgi organization"/>
    <property type="evidence" value="ECO:0000315"/>
    <property type="project" value="RGD"/>
</dbReference>
<dbReference type="GO" id="GO:0001889">
    <property type="term" value="P:liver development"/>
    <property type="evidence" value="ECO:0000270"/>
    <property type="project" value="RGD"/>
</dbReference>
<dbReference type="GO" id="GO:0007091">
    <property type="term" value="P:metaphase/anaphase transition of mitotic cell cycle"/>
    <property type="evidence" value="ECO:0000266"/>
    <property type="project" value="RGD"/>
</dbReference>
<dbReference type="GO" id="GO:0000278">
    <property type="term" value="P:mitotic cell cycle"/>
    <property type="evidence" value="ECO:0000266"/>
    <property type="project" value="RGD"/>
</dbReference>
<dbReference type="GO" id="GO:0000281">
    <property type="term" value="P:mitotic cytokinesis"/>
    <property type="evidence" value="ECO:0000266"/>
    <property type="project" value="RGD"/>
</dbReference>
<dbReference type="GO" id="GO:0000070">
    <property type="term" value="P:mitotic sister chromatid segregation"/>
    <property type="evidence" value="ECO:0000266"/>
    <property type="project" value="RGD"/>
</dbReference>
<dbReference type="GO" id="GO:0050774">
    <property type="term" value="P:negative regulation of dendrite morphogenesis"/>
    <property type="evidence" value="ECO:0000266"/>
    <property type="project" value="RGD"/>
</dbReference>
<dbReference type="GO" id="GO:0035331">
    <property type="term" value="P:negative regulation of hippo signaling"/>
    <property type="evidence" value="ECO:0000266"/>
    <property type="project" value="RGD"/>
</dbReference>
<dbReference type="GO" id="GO:0051402">
    <property type="term" value="P:neuron apoptotic process"/>
    <property type="evidence" value="ECO:0000266"/>
    <property type="project" value="RGD"/>
</dbReference>
<dbReference type="GO" id="GO:0032467">
    <property type="term" value="P:positive regulation of cytokinesis"/>
    <property type="evidence" value="ECO:0000266"/>
    <property type="project" value="RGD"/>
</dbReference>
<dbReference type="GO" id="GO:0099188">
    <property type="term" value="P:postsynaptic cytoskeleton organization"/>
    <property type="evidence" value="ECO:0000314"/>
    <property type="project" value="RGD"/>
</dbReference>
<dbReference type="GO" id="GO:0097119">
    <property type="term" value="P:postsynaptic density protein 95 clustering"/>
    <property type="evidence" value="ECO:0000314"/>
    <property type="project" value="RGD"/>
</dbReference>
<dbReference type="GO" id="GO:0032956">
    <property type="term" value="P:regulation of actin cytoskeleton organization"/>
    <property type="evidence" value="ECO:0000318"/>
    <property type="project" value="GO_Central"/>
</dbReference>
<dbReference type="GO" id="GO:0008064">
    <property type="term" value="P:regulation of actin polymerization or depolymerization"/>
    <property type="evidence" value="ECO:0000314"/>
    <property type="project" value="RGD"/>
</dbReference>
<dbReference type="GO" id="GO:0007283">
    <property type="term" value="P:spermatogenesis"/>
    <property type="evidence" value="ECO:0000266"/>
    <property type="project" value="RGD"/>
</dbReference>
<dbReference type="CDD" id="cd20814">
    <property type="entry name" value="CRIK"/>
    <property type="match status" value="1"/>
</dbReference>
<dbReference type="CDD" id="cd05601">
    <property type="entry name" value="STKc_CRIK"/>
    <property type="match status" value="1"/>
</dbReference>
<dbReference type="FunFam" id="1.10.510.10:FF:000234">
    <property type="entry name" value="Citron rho-interacting serine/threonine kinase"/>
    <property type="match status" value="1"/>
</dbReference>
<dbReference type="FunFam" id="2.30.29.30:FF:000081">
    <property type="entry name" value="Citron rho-interacting serine/threonine kinase"/>
    <property type="match status" value="1"/>
</dbReference>
<dbReference type="FunFam" id="3.30.200.20:FF:000224">
    <property type="entry name" value="Citron rho-interacting serine/threonine kinase"/>
    <property type="match status" value="1"/>
</dbReference>
<dbReference type="FunFam" id="3.30.60.20:FF:000018">
    <property type="entry name" value="Citron rho-interacting serine/threonine kinase"/>
    <property type="match status" value="1"/>
</dbReference>
<dbReference type="Gene3D" id="1.20.5.170">
    <property type="match status" value="1"/>
</dbReference>
<dbReference type="Gene3D" id="1.20.5.340">
    <property type="match status" value="1"/>
</dbReference>
<dbReference type="Gene3D" id="3.30.60.20">
    <property type="match status" value="1"/>
</dbReference>
<dbReference type="Gene3D" id="3.30.200.20">
    <property type="entry name" value="Phosphorylase Kinase, domain 1"/>
    <property type="match status" value="1"/>
</dbReference>
<dbReference type="Gene3D" id="2.30.29.30">
    <property type="entry name" value="Pleckstrin-homology domain (PH domain)/Phosphotyrosine-binding domain (PTB)"/>
    <property type="match status" value="1"/>
</dbReference>
<dbReference type="Gene3D" id="1.10.510.10">
    <property type="entry name" value="Transferase(Phosphotransferase) domain 1"/>
    <property type="match status" value="1"/>
</dbReference>
<dbReference type="InterPro" id="IPR000961">
    <property type="entry name" value="AGC-kinase_C"/>
</dbReference>
<dbReference type="InterPro" id="IPR046349">
    <property type="entry name" value="C1-like_sf"/>
</dbReference>
<dbReference type="InterPro" id="IPR017405">
    <property type="entry name" value="Citron_Rho-interacting_kinase"/>
</dbReference>
<dbReference type="InterPro" id="IPR001180">
    <property type="entry name" value="CNH_dom"/>
</dbReference>
<dbReference type="InterPro" id="IPR037708">
    <property type="entry name" value="CRIK_dom"/>
</dbReference>
<dbReference type="InterPro" id="IPR011009">
    <property type="entry name" value="Kinase-like_dom_sf"/>
</dbReference>
<dbReference type="InterPro" id="IPR002219">
    <property type="entry name" value="PE/DAG-bd"/>
</dbReference>
<dbReference type="InterPro" id="IPR011993">
    <property type="entry name" value="PH-like_dom_sf"/>
</dbReference>
<dbReference type="InterPro" id="IPR001849">
    <property type="entry name" value="PH_domain"/>
</dbReference>
<dbReference type="InterPro" id="IPR017892">
    <property type="entry name" value="Pkinase_C"/>
</dbReference>
<dbReference type="InterPro" id="IPR000719">
    <property type="entry name" value="Prot_kinase_dom"/>
</dbReference>
<dbReference type="InterPro" id="IPR017441">
    <property type="entry name" value="Protein_kinase_ATP_BS"/>
</dbReference>
<dbReference type="InterPro" id="IPR050839">
    <property type="entry name" value="Rho-assoc_Ser/Thr_Kinase"/>
</dbReference>
<dbReference type="InterPro" id="IPR008271">
    <property type="entry name" value="Ser/Thr_kinase_AS"/>
</dbReference>
<dbReference type="PANTHER" id="PTHR22988:SF71">
    <property type="entry name" value="CITRON RHO-INTERACTING KINASE"/>
    <property type="match status" value="1"/>
</dbReference>
<dbReference type="PANTHER" id="PTHR22988">
    <property type="entry name" value="MYOTONIC DYSTROPHY S/T KINASE-RELATED"/>
    <property type="match status" value="1"/>
</dbReference>
<dbReference type="Pfam" id="PF00780">
    <property type="entry name" value="CNH"/>
    <property type="match status" value="1"/>
</dbReference>
<dbReference type="Pfam" id="PF00169">
    <property type="entry name" value="PH"/>
    <property type="match status" value="1"/>
</dbReference>
<dbReference type="Pfam" id="PF00069">
    <property type="entry name" value="Pkinase"/>
    <property type="match status" value="1"/>
</dbReference>
<dbReference type="Pfam" id="PF00433">
    <property type="entry name" value="Pkinase_C"/>
    <property type="match status" value="1"/>
</dbReference>
<dbReference type="PIRSF" id="PIRSF038145">
    <property type="entry name" value="Citron_Rho-interacting_kinase"/>
    <property type="match status" value="1"/>
</dbReference>
<dbReference type="SMART" id="SM00109">
    <property type="entry name" value="C1"/>
    <property type="match status" value="1"/>
</dbReference>
<dbReference type="SMART" id="SM00036">
    <property type="entry name" value="CNH"/>
    <property type="match status" value="1"/>
</dbReference>
<dbReference type="SMART" id="SM00233">
    <property type="entry name" value="PH"/>
    <property type="match status" value="1"/>
</dbReference>
<dbReference type="SMART" id="SM00133">
    <property type="entry name" value="S_TK_X"/>
    <property type="match status" value="1"/>
</dbReference>
<dbReference type="SMART" id="SM00220">
    <property type="entry name" value="S_TKc"/>
    <property type="match status" value="1"/>
</dbReference>
<dbReference type="SUPFAM" id="SSF57889">
    <property type="entry name" value="Cysteine-rich domain"/>
    <property type="match status" value="1"/>
</dbReference>
<dbReference type="SUPFAM" id="SSF50729">
    <property type="entry name" value="PH domain-like"/>
    <property type="match status" value="1"/>
</dbReference>
<dbReference type="SUPFAM" id="SSF56112">
    <property type="entry name" value="Protein kinase-like (PK-like)"/>
    <property type="match status" value="1"/>
</dbReference>
<dbReference type="PROSITE" id="PS51285">
    <property type="entry name" value="AGC_KINASE_CTER"/>
    <property type="match status" value="1"/>
</dbReference>
<dbReference type="PROSITE" id="PS50219">
    <property type="entry name" value="CNH"/>
    <property type="match status" value="1"/>
</dbReference>
<dbReference type="PROSITE" id="PS50003">
    <property type="entry name" value="PH_DOMAIN"/>
    <property type="match status" value="1"/>
</dbReference>
<dbReference type="PROSITE" id="PS00107">
    <property type="entry name" value="PROTEIN_KINASE_ATP"/>
    <property type="match status" value="1"/>
</dbReference>
<dbReference type="PROSITE" id="PS50011">
    <property type="entry name" value="PROTEIN_KINASE_DOM"/>
    <property type="match status" value="1"/>
</dbReference>
<dbReference type="PROSITE" id="PS00108">
    <property type="entry name" value="PROTEIN_KINASE_ST"/>
    <property type="match status" value="1"/>
</dbReference>
<dbReference type="PROSITE" id="PS00479">
    <property type="entry name" value="ZF_DAG_PE_1"/>
    <property type="match status" value="1"/>
</dbReference>
<dbReference type="PROSITE" id="PS50081">
    <property type="entry name" value="ZF_DAG_PE_2"/>
    <property type="match status" value="1"/>
</dbReference>